<sequence length="976" mass="111014">MKLKSVFRSVLKYRKTNLSLLLLITYSIITLLYIFDHERYKLNLPKEDEHPEFNDLLETAWGDLQIITASFHPYTSKENDKVHDYLLKRVLEITGNSSFASVSDDKESERSILFQQQDPFNESSRFSRVTYFESSNILVKLEGKNPEEEGLLLSAHFDSVPTGYGATDDGMGVVSLLANLKYHIKHRPNRTLIFNFNNNEEFGLLGASTYFNHSWSNLTKYVINLEGTGAGGKAVLFRTSDTSTAKIYQQSVKENPFGNSIYQQGFYSRYVRSETDYKIYEENGMRGWDVAFYKPRNLYHTIKDSIQYTSKASLWHMLHTSLQLSAYVASNSLDTADQTPACYFDFIGLKFFVISAKTLFYWNCIFLLVSPVVAIGLYLISRDRMTWKSHSWLSWTRFPLSLAAGIIVQKLFSNDIIRSNPLTFSRNYFWPISAFFTQVIFTSYVLINCSNFFFPCADMKSLSIIELFIILWTILLFTSKLLYSSDYRYTGLYPLSIFFLLSTIAAILRLLALALGMRTRKRLGRECRDHHSNYSSHSQIDMERDGQENLEQPQDQFTSSQDDQASIQDDNVSTTSAGPSHNVDEDHGMDSSSQQHDERVPLLKGSNSMEEGLSTRENSLKLEYTDYAWIIQFLLIVPIPSFILFNSVDVIMDALNHTVQEGSKATFDVLRFGMVGSILIALPILPFFYKVNYITISLTALLFLISASKTLLVHPFTNSNPLKVRFSQNIDLSQGNAASVHVLGREGNFLKPMLQDLPSIKYSSTHINCTSVTNGMELCMYDGMQPNLLSTNGNTNISSMVKVHVLHNNRNSTERSPYEPIVAELLLEVKENRACTLTFESRHQAKSPVREITVYQKKNSAPQKANITKTIKSASGINELQLHKLDFDKETYHIGVQWFPKLLTDGNVEDDKLGTKDELSVSISCYWGEYDSESVVNGTAVRKIPAFDELINYAPLSFSFTNEQKGLVIVKDAIIL</sequence>
<comment type="function">
    <text evidence="1">May be involved in vacuolar sorting and osmoregulation.</text>
</comment>
<comment type="cofactor">
    <cofactor evidence="2">
        <name>Zn(2+)</name>
        <dbReference type="ChEBI" id="CHEBI:29105"/>
    </cofactor>
    <text evidence="2">Binds 2 Zn(2+) ions per subunit.</text>
</comment>
<comment type="subcellular location">
    <subcellularLocation>
        <location evidence="1">Vacuole membrane</location>
        <topology evidence="3">Multi-pass membrane protein</topology>
    </subcellularLocation>
</comment>
<comment type="similarity">
    <text evidence="6">Belongs to the peptidase M28 family.</text>
</comment>
<reference key="1">
    <citation type="journal article" date="2009" name="Genome Res.">
        <title>Genome structure of a Saccharomyces cerevisiae strain widely used in bioethanol production.</title>
        <authorList>
            <person name="Argueso J.L."/>
            <person name="Carazzolle M.F."/>
            <person name="Mieczkowski P.A."/>
            <person name="Duarte F.M."/>
            <person name="Netto O.V.C."/>
            <person name="Missawa S.K."/>
            <person name="Galzerani F."/>
            <person name="Costa G.G.L."/>
            <person name="Vidal R.O."/>
            <person name="Noronha M.F."/>
            <person name="Dominska M."/>
            <person name="Andrietta M.G.S."/>
            <person name="Andrietta S.R."/>
            <person name="Cunha A.F."/>
            <person name="Gomes L.H."/>
            <person name="Tavares F.C.A."/>
            <person name="Alcarde A.R."/>
            <person name="Dietrich F.S."/>
            <person name="McCusker J.H."/>
            <person name="Petes T.D."/>
            <person name="Pereira G.A.G."/>
        </authorList>
    </citation>
    <scope>NUCLEOTIDE SEQUENCE [LARGE SCALE GENOMIC DNA]</scope>
    <source>
        <strain>JAY291</strain>
    </source>
</reference>
<keyword id="KW-0325">Glycoprotein</keyword>
<keyword id="KW-0378">Hydrolase</keyword>
<keyword id="KW-0472">Membrane</keyword>
<keyword id="KW-0479">Metal-binding</keyword>
<keyword id="KW-0482">Metalloprotease</keyword>
<keyword id="KW-0645">Protease</keyword>
<keyword id="KW-0812">Transmembrane</keyword>
<keyword id="KW-1133">Transmembrane helix</keyword>
<keyword id="KW-0926">Vacuole</keyword>
<keyword id="KW-0862">Zinc</keyword>
<name>PFF1_YEAS2</name>
<dbReference type="EC" id="3.4.-.-" evidence="6"/>
<dbReference type="EMBL" id="ACFL01000124">
    <property type="protein sequence ID" value="EEU06939.1"/>
    <property type="molecule type" value="Genomic_DNA"/>
</dbReference>
<dbReference type="SMR" id="C7GQI9"/>
<dbReference type="OrthoDB" id="36254at4893"/>
<dbReference type="Proteomes" id="UP000008073">
    <property type="component" value="Unassembled WGS sequence"/>
</dbReference>
<dbReference type="GO" id="GO:0005774">
    <property type="term" value="C:vacuolar membrane"/>
    <property type="evidence" value="ECO:0007669"/>
    <property type="project" value="UniProtKB-SubCell"/>
</dbReference>
<dbReference type="GO" id="GO:0046872">
    <property type="term" value="F:metal ion binding"/>
    <property type="evidence" value="ECO:0007669"/>
    <property type="project" value="UniProtKB-KW"/>
</dbReference>
<dbReference type="GO" id="GO:0008235">
    <property type="term" value="F:metalloexopeptidase activity"/>
    <property type="evidence" value="ECO:0007669"/>
    <property type="project" value="InterPro"/>
</dbReference>
<dbReference type="GO" id="GO:0006508">
    <property type="term" value="P:proteolysis"/>
    <property type="evidence" value="ECO:0007669"/>
    <property type="project" value="UniProtKB-KW"/>
</dbReference>
<dbReference type="CDD" id="cd03875">
    <property type="entry name" value="M28_Fxna_like"/>
    <property type="match status" value="1"/>
</dbReference>
<dbReference type="FunFam" id="3.40.630.10:FF:000057">
    <property type="entry name" value="Vacuolar membrane protease"/>
    <property type="match status" value="1"/>
</dbReference>
<dbReference type="Gene3D" id="3.40.630.10">
    <property type="entry name" value="Zn peptidases"/>
    <property type="match status" value="1"/>
</dbReference>
<dbReference type="InterPro" id="IPR048024">
    <property type="entry name" value="Fxna-like_M28_dom"/>
</dbReference>
<dbReference type="InterPro" id="IPR045175">
    <property type="entry name" value="M28_fam"/>
</dbReference>
<dbReference type="InterPro" id="IPR007484">
    <property type="entry name" value="Peptidase_M28"/>
</dbReference>
<dbReference type="InterPro" id="IPR053975">
    <property type="entry name" value="PFF1_C"/>
</dbReference>
<dbReference type="InterPro" id="IPR053976">
    <property type="entry name" value="PFF1_TM"/>
</dbReference>
<dbReference type="PANTHER" id="PTHR12147">
    <property type="entry name" value="METALLOPEPTIDASE M28 FAMILY MEMBER"/>
    <property type="match status" value="1"/>
</dbReference>
<dbReference type="PANTHER" id="PTHR12147:SF58">
    <property type="entry name" value="VACUOLAR MEMBRANE PROTEASE"/>
    <property type="match status" value="1"/>
</dbReference>
<dbReference type="Pfam" id="PF04389">
    <property type="entry name" value="Peptidase_M28"/>
    <property type="match status" value="1"/>
</dbReference>
<dbReference type="Pfam" id="PF22250">
    <property type="entry name" value="PFF1_C"/>
    <property type="match status" value="1"/>
</dbReference>
<dbReference type="Pfam" id="PF22251">
    <property type="entry name" value="PFF1_TM"/>
    <property type="match status" value="1"/>
</dbReference>
<dbReference type="SUPFAM" id="SSF53187">
    <property type="entry name" value="Zn-dependent exopeptidases"/>
    <property type="match status" value="1"/>
</dbReference>
<proteinExistence type="inferred from homology"/>
<gene>
    <name type="ORF">C1Q_02588</name>
</gene>
<protein>
    <recommendedName>
        <fullName evidence="1">Vacuolar membrane protease</fullName>
        <ecNumber evidence="6">3.4.-.-</ecNumber>
    </recommendedName>
    <alternativeName>
        <fullName evidence="1">FXNA-related family protease 1</fullName>
    </alternativeName>
</protein>
<feature type="chain" id="PRO_0000411751" description="Vacuolar membrane protease">
    <location>
        <begin position="1"/>
        <end position="976"/>
    </location>
</feature>
<feature type="topological domain" description="Cytoplasmic" evidence="1">
    <location>
        <begin position="1"/>
        <end position="15"/>
    </location>
</feature>
<feature type="transmembrane region" description="Helical; Name=1" evidence="3">
    <location>
        <begin position="16"/>
        <end position="36"/>
    </location>
</feature>
<feature type="topological domain" description="Vacuolar" evidence="1">
    <location>
        <begin position="37"/>
        <end position="359"/>
    </location>
</feature>
<feature type="transmembrane region" description="Helical; Name=2" evidence="3">
    <location>
        <begin position="360"/>
        <end position="380"/>
    </location>
</feature>
<feature type="topological domain" description="Cytoplasmic" evidence="1">
    <location>
        <begin position="381"/>
        <end position="392"/>
    </location>
</feature>
<feature type="transmembrane region" description="Helical; Name=3" evidence="3">
    <location>
        <begin position="393"/>
        <end position="412"/>
    </location>
</feature>
<feature type="topological domain" description="Vacuolar" evidence="1">
    <location>
        <begin position="413"/>
        <end position="428"/>
    </location>
</feature>
<feature type="transmembrane region" description="Helical; Name=4" evidence="3">
    <location>
        <begin position="429"/>
        <end position="449"/>
    </location>
</feature>
<feature type="topological domain" description="Cytoplasmic" evidence="1">
    <location>
        <begin position="450"/>
        <end position="461"/>
    </location>
</feature>
<feature type="transmembrane region" description="Helical; Name=5" evidence="3">
    <location>
        <begin position="462"/>
        <end position="482"/>
    </location>
</feature>
<feature type="topological domain" description="Vacuolar" evidence="1">
    <location>
        <begin position="483"/>
        <end position="496"/>
    </location>
</feature>
<feature type="transmembrane region" description="Helical; Name=6" evidence="3">
    <location>
        <begin position="497"/>
        <end position="517"/>
    </location>
</feature>
<feature type="topological domain" description="Cytoplasmic" evidence="1">
    <location>
        <begin position="518"/>
        <end position="627"/>
    </location>
</feature>
<feature type="transmembrane region" description="Helical; Name=7" evidence="3">
    <location>
        <begin position="628"/>
        <end position="648"/>
    </location>
</feature>
<feature type="topological domain" description="Vacuolar" evidence="1">
    <location>
        <begin position="649"/>
        <end position="668"/>
    </location>
</feature>
<feature type="transmembrane region" description="Helical; Name=8" evidence="3">
    <location>
        <begin position="669"/>
        <end position="689"/>
    </location>
</feature>
<feature type="topological domain" description="Cytoplasmic" evidence="1">
    <location>
        <begin position="690"/>
        <end position="692"/>
    </location>
</feature>
<feature type="transmembrane region" description="Helical; Name=9" evidence="3">
    <location>
        <begin position="693"/>
        <end position="713"/>
    </location>
</feature>
<feature type="topological domain" description="Vacuolar" evidence="1">
    <location>
        <begin position="714"/>
        <end position="976"/>
    </location>
</feature>
<feature type="region of interest" description="Disordered" evidence="5">
    <location>
        <begin position="528"/>
        <end position="610"/>
    </location>
</feature>
<feature type="compositionally biased region" description="Polar residues" evidence="5">
    <location>
        <begin position="549"/>
        <end position="558"/>
    </location>
</feature>
<feature type="compositionally biased region" description="Low complexity" evidence="5">
    <location>
        <begin position="559"/>
        <end position="570"/>
    </location>
</feature>
<feature type="compositionally biased region" description="Basic and acidic residues" evidence="5">
    <location>
        <begin position="582"/>
        <end position="601"/>
    </location>
</feature>
<feature type="active site" description="Proton acceptor" evidence="2">
    <location>
        <position position="200"/>
    </location>
</feature>
<feature type="binding site" evidence="2">
    <location>
        <position position="156"/>
    </location>
    <ligand>
        <name>Zn(2+)</name>
        <dbReference type="ChEBI" id="CHEBI:29105"/>
        <label>1</label>
        <note>catalytic</note>
    </ligand>
</feature>
<feature type="binding site" evidence="2">
    <location>
        <position position="168"/>
    </location>
    <ligand>
        <name>Zn(2+)</name>
        <dbReference type="ChEBI" id="CHEBI:29105"/>
        <label>1</label>
        <note>catalytic</note>
    </ligand>
</feature>
<feature type="binding site" evidence="2">
    <location>
        <position position="168"/>
    </location>
    <ligand>
        <name>Zn(2+)</name>
        <dbReference type="ChEBI" id="CHEBI:29105"/>
        <label>2</label>
        <note>catalytic</note>
    </ligand>
</feature>
<feature type="binding site" evidence="2">
    <location>
        <position position="201"/>
    </location>
    <ligand>
        <name>Zn(2+)</name>
        <dbReference type="ChEBI" id="CHEBI:29105"/>
        <label>2</label>
        <note>catalytic</note>
    </ligand>
</feature>
<feature type="binding site" evidence="2">
    <location>
        <position position="226"/>
    </location>
    <ligand>
        <name>Zn(2+)</name>
        <dbReference type="ChEBI" id="CHEBI:29105"/>
        <label>1</label>
        <note>catalytic</note>
    </ligand>
</feature>
<feature type="binding site" evidence="2">
    <location>
        <position position="300"/>
    </location>
    <ligand>
        <name>Zn(2+)</name>
        <dbReference type="ChEBI" id="CHEBI:29105"/>
        <label>2</label>
        <note>catalytic</note>
    </ligand>
</feature>
<feature type="site" description="Transition state stabilizer" evidence="2">
    <location>
        <position position="299"/>
    </location>
</feature>
<feature type="glycosylation site" description="N-linked (GlcNAc...) asparagine" evidence="4">
    <location>
        <position position="96"/>
    </location>
</feature>
<feature type="glycosylation site" description="N-linked (GlcNAc...) asparagine" evidence="4">
    <location>
        <position position="121"/>
    </location>
</feature>
<feature type="glycosylation site" description="N-linked (GlcNAc...) asparagine" evidence="4">
    <location>
        <position position="189"/>
    </location>
</feature>
<feature type="glycosylation site" description="N-linked (GlcNAc...) asparagine" evidence="4">
    <location>
        <position position="212"/>
    </location>
</feature>
<feature type="glycosylation site" description="N-linked (GlcNAc...) asparagine" evidence="4">
    <location>
        <position position="217"/>
    </location>
</feature>
<feature type="glycosylation site" description="N-linked (GlcNAc...) asparagine" evidence="4">
    <location>
        <position position="656"/>
    </location>
</feature>
<feature type="glycosylation site" description="N-linked (GlcNAc...) asparagine" evidence="4">
    <location>
        <position position="768"/>
    </location>
</feature>
<feature type="glycosylation site" description="N-linked (GlcNAc...) asparagine" evidence="4">
    <location>
        <position position="796"/>
    </location>
</feature>
<feature type="glycosylation site" description="N-linked (GlcNAc...) asparagine" evidence="4">
    <location>
        <position position="811"/>
    </location>
</feature>
<feature type="glycosylation site" description="N-linked (GlcNAc...) asparagine" evidence="4">
    <location>
        <position position="866"/>
    </location>
</feature>
<feature type="glycosylation site" description="N-linked (GlcNAc...) asparagine" evidence="4">
    <location>
        <position position="937"/>
    </location>
</feature>
<organism>
    <name type="scientific">Saccharomyces cerevisiae (strain JAY291)</name>
    <name type="common">Baker's yeast</name>
    <dbReference type="NCBI Taxonomy" id="574961"/>
    <lineage>
        <taxon>Eukaryota</taxon>
        <taxon>Fungi</taxon>
        <taxon>Dikarya</taxon>
        <taxon>Ascomycota</taxon>
        <taxon>Saccharomycotina</taxon>
        <taxon>Saccharomycetes</taxon>
        <taxon>Saccharomycetales</taxon>
        <taxon>Saccharomycetaceae</taxon>
        <taxon>Saccharomyces</taxon>
    </lineage>
</organism>
<accession>C7GQI9</accession>
<evidence type="ECO:0000250" key="1">
    <source>
        <dbReference type="UniProtKB" id="P38244"/>
    </source>
</evidence>
<evidence type="ECO:0000250" key="2">
    <source>
        <dbReference type="UniProtKB" id="P80561"/>
    </source>
</evidence>
<evidence type="ECO:0000255" key="3"/>
<evidence type="ECO:0000255" key="4">
    <source>
        <dbReference type="PROSITE-ProRule" id="PRU00498"/>
    </source>
</evidence>
<evidence type="ECO:0000256" key="5">
    <source>
        <dbReference type="SAM" id="MobiDB-lite"/>
    </source>
</evidence>
<evidence type="ECO:0000305" key="6"/>